<accession>Q8CHP0</accession>
<accession>Q80X78</accession>
<gene>
    <name type="primary">Zc3h3</name>
    <name type="synonym">Kiaa0150</name>
    <name evidence="5" type="synonym">Smicl</name>
    <name type="synonym">Zc3hdc3</name>
    <name type="synonym">Zfp623</name>
</gene>
<comment type="function">
    <text evidence="1 4">Required for the export of polyadenylated mRNAs from the nucleus (By similarity). Enhances ACVR1B-induced SMAD-dependent transcription. Binds to single-stranded DNA but not to double-stranded DNA in vitro. Involved in RNA cleavage (PubMed:16115198).</text>
</comment>
<comment type="subunit">
    <text evidence="4">Interacts with SMAD1, SMAD3, SMAD4, CPSF2 and CPSF3.</text>
</comment>
<comment type="subcellular location">
    <subcellularLocation>
        <location evidence="4">Nucleus</location>
    </subcellularLocation>
</comment>
<evidence type="ECO:0000250" key="1">
    <source>
        <dbReference type="UniProtKB" id="Q8IXZ2"/>
    </source>
</evidence>
<evidence type="ECO:0000255" key="2">
    <source>
        <dbReference type="PROSITE-ProRule" id="PRU00723"/>
    </source>
</evidence>
<evidence type="ECO:0000256" key="3">
    <source>
        <dbReference type="SAM" id="MobiDB-lite"/>
    </source>
</evidence>
<evidence type="ECO:0000269" key="4">
    <source>
    </source>
</evidence>
<evidence type="ECO:0000303" key="5">
    <source>
    </source>
</evidence>
<evidence type="ECO:0007744" key="6">
    <source>
    </source>
</evidence>
<dbReference type="EMBL" id="AJ516034">
    <property type="protein sequence ID" value="CAD56773.1"/>
    <property type="molecule type" value="mRNA"/>
</dbReference>
<dbReference type="EMBL" id="BC049953">
    <property type="protein sequence ID" value="AAH49953.1"/>
    <property type="molecule type" value="mRNA"/>
</dbReference>
<dbReference type="EMBL" id="BC060682">
    <property type="protein sequence ID" value="AAH60682.1"/>
    <property type="molecule type" value="mRNA"/>
</dbReference>
<dbReference type="CCDS" id="CCDS27550.1"/>
<dbReference type="RefSeq" id="NP_742119.1">
    <property type="nucleotide sequence ID" value="NM_172121.2"/>
</dbReference>
<dbReference type="FunCoup" id="Q8CHP0">
    <property type="interactions" value="2337"/>
</dbReference>
<dbReference type="STRING" id="10090.ENSMUSP00000098106"/>
<dbReference type="iPTMnet" id="Q8CHP0"/>
<dbReference type="PhosphoSitePlus" id="Q8CHP0"/>
<dbReference type="jPOST" id="Q8CHP0"/>
<dbReference type="PaxDb" id="10090-ENSMUSP00000098106"/>
<dbReference type="ProteomicsDB" id="275268"/>
<dbReference type="Antibodypedia" id="14596">
    <property type="antibodies" value="97 antibodies from 20 providers"/>
</dbReference>
<dbReference type="DNASU" id="223642"/>
<dbReference type="Ensembl" id="ENSMUST00000100538.4">
    <property type="protein sequence ID" value="ENSMUSP00000098106.3"/>
    <property type="gene ID" value="ENSMUSG00000075600.4"/>
</dbReference>
<dbReference type="GeneID" id="223642"/>
<dbReference type="KEGG" id="mmu:223642"/>
<dbReference type="UCSC" id="uc007whf.1">
    <property type="organism name" value="mouse"/>
</dbReference>
<dbReference type="AGR" id="MGI:2663721"/>
<dbReference type="CTD" id="23144"/>
<dbReference type="MGI" id="MGI:2663721">
    <property type="gene designation" value="Zc3h3"/>
</dbReference>
<dbReference type="VEuPathDB" id="HostDB:ENSMUSG00000075600"/>
<dbReference type="eggNOG" id="KOG1492">
    <property type="taxonomic scope" value="Eukaryota"/>
</dbReference>
<dbReference type="GeneTree" id="ENSGT00940000161068"/>
<dbReference type="HOGENOM" id="CLU_014207_0_0_1"/>
<dbReference type="InParanoid" id="Q8CHP0"/>
<dbReference type="OMA" id="VSCRTNK"/>
<dbReference type="OrthoDB" id="3247158at2759"/>
<dbReference type="PhylomeDB" id="Q8CHP0"/>
<dbReference type="TreeFam" id="TF324375"/>
<dbReference type="BioGRID-ORCS" id="223642">
    <property type="hits" value="15 hits in 79 CRISPR screens"/>
</dbReference>
<dbReference type="ChiTaRS" id="Zc3h3">
    <property type="organism name" value="mouse"/>
</dbReference>
<dbReference type="PRO" id="PR:Q8CHP0"/>
<dbReference type="Proteomes" id="UP000000589">
    <property type="component" value="Chromosome 15"/>
</dbReference>
<dbReference type="RNAct" id="Q8CHP0">
    <property type="molecule type" value="protein"/>
</dbReference>
<dbReference type="Bgee" id="ENSMUSG00000075600">
    <property type="expression patterns" value="Expressed in islet of Langerhans and 77 other cell types or tissues"/>
</dbReference>
<dbReference type="ExpressionAtlas" id="Q8CHP0">
    <property type="expression patterns" value="baseline and differential"/>
</dbReference>
<dbReference type="GO" id="GO:0005847">
    <property type="term" value="C:mRNA cleavage and polyadenylation specificity factor complex"/>
    <property type="evidence" value="ECO:0000314"/>
    <property type="project" value="MGI"/>
</dbReference>
<dbReference type="GO" id="GO:0005634">
    <property type="term" value="C:nucleus"/>
    <property type="evidence" value="ECO:0000250"/>
    <property type="project" value="UniProtKB"/>
</dbReference>
<dbReference type="GO" id="GO:0003677">
    <property type="term" value="F:DNA binding"/>
    <property type="evidence" value="ECO:0007669"/>
    <property type="project" value="UniProtKB-KW"/>
</dbReference>
<dbReference type="GO" id="GO:0070412">
    <property type="term" value="F:R-SMAD binding"/>
    <property type="evidence" value="ECO:0000314"/>
    <property type="project" value="MGI"/>
</dbReference>
<dbReference type="GO" id="GO:0046332">
    <property type="term" value="F:SMAD binding"/>
    <property type="evidence" value="ECO:0000353"/>
    <property type="project" value="MGI"/>
</dbReference>
<dbReference type="GO" id="GO:0008270">
    <property type="term" value="F:zinc ion binding"/>
    <property type="evidence" value="ECO:0007669"/>
    <property type="project" value="UniProtKB-KW"/>
</dbReference>
<dbReference type="GO" id="GO:0031124">
    <property type="term" value="P:mRNA 3'-end processing"/>
    <property type="evidence" value="ECO:0000314"/>
    <property type="project" value="MGI"/>
</dbReference>
<dbReference type="GO" id="GO:0051028">
    <property type="term" value="P:mRNA transport"/>
    <property type="evidence" value="ECO:0007669"/>
    <property type="project" value="UniProtKB-KW"/>
</dbReference>
<dbReference type="GO" id="GO:0032927">
    <property type="term" value="P:positive regulation of activin receptor signaling pathway"/>
    <property type="evidence" value="ECO:0000316"/>
    <property type="project" value="MGI"/>
</dbReference>
<dbReference type="FunFam" id="4.10.1000.10:FF:000008">
    <property type="entry name" value="zinc finger CCCH domain-containing protein 3"/>
    <property type="match status" value="1"/>
</dbReference>
<dbReference type="FunFam" id="4.10.1000.10:FF:000022">
    <property type="entry name" value="Zinc finger CCCH domain-containing protein 7"/>
    <property type="match status" value="1"/>
</dbReference>
<dbReference type="Gene3D" id="4.10.1000.10">
    <property type="entry name" value="Zinc finger, CCCH-type"/>
    <property type="match status" value="2"/>
</dbReference>
<dbReference type="InterPro" id="IPR000571">
    <property type="entry name" value="Znf_CCCH"/>
</dbReference>
<dbReference type="InterPro" id="IPR036855">
    <property type="entry name" value="Znf_CCCH_sf"/>
</dbReference>
<dbReference type="PANTHER" id="PTHR46156">
    <property type="entry name" value="CCCH ZINGC FINGER"/>
    <property type="match status" value="1"/>
</dbReference>
<dbReference type="PANTHER" id="PTHR46156:SF1">
    <property type="entry name" value="ZINC FINGER CCCH DOMAIN-CONTAINING PROTEIN 3"/>
    <property type="match status" value="1"/>
</dbReference>
<dbReference type="Pfam" id="PF00642">
    <property type="entry name" value="zf-CCCH"/>
    <property type="match status" value="2"/>
</dbReference>
<dbReference type="SMART" id="SM00356">
    <property type="entry name" value="ZnF_C3H1"/>
    <property type="match status" value="5"/>
</dbReference>
<dbReference type="SUPFAM" id="SSF90229">
    <property type="entry name" value="CCCH zinc finger"/>
    <property type="match status" value="1"/>
</dbReference>
<dbReference type="PROSITE" id="PS50103">
    <property type="entry name" value="ZF_C3H1"/>
    <property type="match status" value="5"/>
</dbReference>
<proteinExistence type="evidence at protein level"/>
<name>ZC3H3_MOUSE</name>
<protein>
    <recommendedName>
        <fullName>Zinc finger CCCH domain-containing protein 3</fullName>
    </recommendedName>
    <alternativeName>
        <fullName evidence="5">Smad-interacting CPSF-like factor</fullName>
    </alternativeName>
</protein>
<organism>
    <name type="scientific">Mus musculus</name>
    <name type="common">Mouse</name>
    <dbReference type="NCBI Taxonomy" id="10090"/>
    <lineage>
        <taxon>Eukaryota</taxon>
        <taxon>Metazoa</taxon>
        <taxon>Chordata</taxon>
        <taxon>Craniata</taxon>
        <taxon>Vertebrata</taxon>
        <taxon>Euteleostomi</taxon>
        <taxon>Mammalia</taxon>
        <taxon>Eutheria</taxon>
        <taxon>Euarchontoglires</taxon>
        <taxon>Glires</taxon>
        <taxon>Rodentia</taxon>
        <taxon>Myomorpha</taxon>
        <taxon>Muroidea</taxon>
        <taxon>Muridae</taxon>
        <taxon>Murinae</taxon>
        <taxon>Mus</taxon>
        <taxon>Mus</taxon>
    </lineage>
</organism>
<feature type="chain" id="PRO_0000213897" description="Zinc finger CCCH domain-containing protein 3">
    <location>
        <begin position="1"/>
        <end position="950"/>
    </location>
</feature>
<feature type="zinc finger region" description="C3H1-type 1" evidence="2">
    <location>
        <begin position="662"/>
        <end position="690"/>
    </location>
</feature>
<feature type="zinc finger region" description="C3H1-type 2" evidence="2">
    <location>
        <begin position="694"/>
        <end position="717"/>
    </location>
</feature>
<feature type="zinc finger region" description="C3H1-type 3" evidence="2">
    <location>
        <begin position="718"/>
        <end position="744"/>
    </location>
</feature>
<feature type="zinc finger region" description="C3H1-type 4" evidence="2">
    <location>
        <begin position="745"/>
        <end position="772"/>
    </location>
</feature>
<feature type="zinc finger region" description="C3H1-type 5" evidence="2">
    <location>
        <begin position="773"/>
        <end position="795"/>
    </location>
</feature>
<feature type="region of interest" description="Disordered" evidence="3">
    <location>
        <begin position="32"/>
        <end position="106"/>
    </location>
</feature>
<feature type="region of interest" description="Disordered" evidence="3">
    <location>
        <begin position="127"/>
        <end position="182"/>
    </location>
</feature>
<feature type="region of interest" description="Disordered" evidence="3">
    <location>
        <begin position="201"/>
        <end position="220"/>
    </location>
</feature>
<feature type="region of interest" description="Disordered" evidence="3">
    <location>
        <begin position="314"/>
        <end position="489"/>
    </location>
</feature>
<feature type="region of interest" description="Disordered" evidence="3">
    <location>
        <begin position="793"/>
        <end position="950"/>
    </location>
</feature>
<feature type="compositionally biased region" description="Basic residues" evidence="3">
    <location>
        <begin position="56"/>
        <end position="74"/>
    </location>
</feature>
<feature type="compositionally biased region" description="Polar residues" evidence="3">
    <location>
        <begin position="76"/>
        <end position="96"/>
    </location>
</feature>
<feature type="compositionally biased region" description="Polar residues" evidence="3">
    <location>
        <begin position="327"/>
        <end position="338"/>
    </location>
</feature>
<feature type="compositionally biased region" description="Basic and acidic residues" evidence="3">
    <location>
        <begin position="344"/>
        <end position="360"/>
    </location>
</feature>
<feature type="compositionally biased region" description="Low complexity" evidence="3">
    <location>
        <begin position="370"/>
        <end position="388"/>
    </location>
</feature>
<feature type="compositionally biased region" description="Polar residues" evidence="3">
    <location>
        <begin position="402"/>
        <end position="412"/>
    </location>
</feature>
<feature type="compositionally biased region" description="Basic residues" evidence="3">
    <location>
        <begin position="438"/>
        <end position="449"/>
    </location>
</feature>
<feature type="compositionally biased region" description="Polar residues" evidence="3">
    <location>
        <begin position="460"/>
        <end position="470"/>
    </location>
</feature>
<feature type="compositionally biased region" description="Polar residues" evidence="3">
    <location>
        <begin position="828"/>
        <end position="838"/>
    </location>
</feature>
<feature type="compositionally biased region" description="Low complexity" evidence="3">
    <location>
        <begin position="839"/>
        <end position="849"/>
    </location>
</feature>
<feature type="compositionally biased region" description="Low complexity" evidence="3">
    <location>
        <begin position="857"/>
        <end position="888"/>
    </location>
</feature>
<feature type="compositionally biased region" description="Polar residues" evidence="3">
    <location>
        <begin position="914"/>
        <end position="928"/>
    </location>
</feature>
<feature type="modified residue" description="Phosphoserine" evidence="1">
    <location>
        <position position="405"/>
    </location>
</feature>
<feature type="modified residue" description="Phosphoserine" evidence="6">
    <location>
        <position position="851"/>
    </location>
</feature>
<feature type="modified residue" description="Phosphoserine" evidence="6">
    <location>
        <position position="855"/>
    </location>
</feature>
<feature type="modified residue" description="Phosphoserine" evidence="1">
    <location>
        <position position="918"/>
    </location>
</feature>
<feature type="modified residue" description="Phosphoserine" evidence="1">
    <location>
        <position position="920"/>
    </location>
</feature>
<feature type="modified residue" description="Phosphoserine" evidence="6">
    <location>
        <position position="934"/>
    </location>
</feature>
<reference key="1">
    <citation type="submission" date="2002-11" db="EMBL/GenBank/DDBJ databases">
        <title>Cloning of mouse KIAA0150 gene product.</title>
        <authorList>
            <person name="Van Veldhoven P.P."/>
        </authorList>
    </citation>
    <scope>NUCLEOTIDE SEQUENCE [MRNA]</scope>
    <source>
        <strain>FVB/N</strain>
    </source>
</reference>
<reference key="2">
    <citation type="journal article" date="2004" name="Genome Res.">
        <title>The status, quality, and expansion of the NIH full-length cDNA project: the Mammalian Gene Collection (MGC).</title>
        <authorList>
            <consortium name="The MGC Project Team"/>
        </authorList>
    </citation>
    <scope>NUCLEOTIDE SEQUENCE [LARGE SCALE MRNA]</scope>
    <source>
        <strain>C57BL/6J</strain>
        <strain>FVB/N</strain>
        <tissue>Salivary gland</tissue>
    </source>
</reference>
<reference key="3">
    <citation type="journal article" date="2005" name="Genes Cells">
        <title>Smicl is a novel Smad interacting protein and cleavage and polyadenylation specificity factor associated protein.</title>
        <authorList>
            <person name="Collart C."/>
            <person name="Remacle J.E."/>
            <person name="Barabino S."/>
            <person name="van Grunsven L.A."/>
            <person name="Nelles L."/>
            <person name="Schellens A."/>
            <person name="Van de Putte T."/>
            <person name="Pype S."/>
            <person name="Huylebroeck D."/>
            <person name="Verschueren K."/>
        </authorList>
    </citation>
    <scope>FUNCTION</scope>
    <scope>INTERACTION WITH SMAD1; SMAD3; SMAD4; CPSF2 AND CPSF3</scope>
    <scope>SUBCELLULAR LOCATION</scope>
</reference>
<reference key="4">
    <citation type="journal article" date="2010" name="Cell">
        <title>A tissue-specific atlas of mouse protein phosphorylation and expression.</title>
        <authorList>
            <person name="Huttlin E.L."/>
            <person name="Jedrychowski M.P."/>
            <person name="Elias J.E."/>
            <person name="Goswami T."/>
            <person name="Rad R."/>
            <person name="Beausoleil S.A."/>
            <person name="Villen J."/>
            <person name="Haas W."/>
            <person name="Sowa M.E."/>
            <person name="Gygi S.P."/>
        </authorList>
    </citation>
    <scope>PHOSPHORYLATION [LARGE SCALE ANALYSIS] AT SER-851; SER-855 AND SER-934</scope>
    <scope>IDENTIFICATION BY MASS SPECTROMETRY [LARGE SCALE ANALYSIS]</scope>
    <source>
        <tissue>Brain</tissue>
        <tissue>Lung</tissue>
        <tissue>Spleen</tissue>
        <tissue>Testis</tissue>
    </source>
</reference>
<sequence length="950" mass="103224">MEEKEQLRRQIRLLQGLIDDYKTLHGNGPALGNSSATRWQPPMFPGGRTFGARYSRPSRRGFSSHHGPSWRKKYSLVNQPVESSDPASDPAFQTSLRSEDSQHPEPQQYVLERQVQLSPDQNMVIKIKPPSKSGAINASGVQRGSLEGCDDPSWSGQRPQGSEVEVPGGQLQPARPGRTKVGYSVDDPLLVCQKEPGKPRVVKSVGRVSDSSPEHRRTVSENEVALRVHFPSVLPHHTAVALGRKVGPHSTSYSEQFIGDQRANTGHSDQPASLGPVVASVRPATARQVREASLLVSCRTSKFRKNNYKWVAASEKSPRVARRALSPRTTLESGNKATLGTVGKTEKPQPKVDPEVRPEKLATPSKPGLSPSKYKWKASSPSASSSSSFRWQSEAGSKDHTSQLSPVPSRPTSGDRPAGGPSSLKPLFGESQLSAYKVKSRTKIIRRRGNTSIPGDKKNSPTTATTSKNHLTQRRRQALRGKNSPVLRKTPHKGLMQVNRHRLCCLPSSRTHLSTKEASSVHMGIPPSNKVIKTRYRIVKKTPSSSFGAPSFPSSLPSWRARRIPLSRSLVLNRLRPAITGGGKAPPGTPRWRNKGYRCIGGVLYKVSANKLSKTSSRPSDGNRTLLRTGRLDPATTCSRSLASRAIQRSLAIIRQAKQKKEKKREYCMYYNRFGRCNRGECCPYIHDPEKVAVCTRFVRGTCKKTDGSCPFSHHVSKEKMPVCSYFLKGICSNSNCPYSHVYVSRKAEVCSDFLKGYCPLGAKCKKKHTLLCPDFARRGICPRGSQCQLLHRNQKRHGRRTAAPPIPGPSDGAPRSKASAGHVLRKPTTTQRSVRQMSSGLASGAEAPASPPPSPRVLASTSTLSSKATAASSPSPSPSTSSPAPSLEQEEAVSGTGSGTGSSGLCKLPSFISLHSSPSPGGQTETGPQAPRSPRTKDSGKPLHIKPRL</sequence>
<keyword id="KW-0238">DNA-binding</keyword>
<keyword id="KW-0479">Metal-binding</keyword>
<keyword id="KW-0509">mRNA transport</keyword>
<keyword id="KW-0539">Nucleus</keyword>
<keyword id="KW-0597">Phosphoprotein</keyword>
<keyword id="KW-1185">Reference proteome</keyword>
<keyword id="KW-0677">Repeat</keyword>
<keyword id="KW-0813">Transport</keyword>
<keyword id="KW-0862">Zinc</keyword>
<keyword id="KW-0863">Zinc-finger</keyword>